<accession>O94221</accession>
<feature type="signal peptide" evidence="2">
    <location>
        <begin position="1"/>
        <end position="18"/>
    </location>
</feature>
<feature type="chain" id="PRO_5000064513" description="Probable alpha-galactosidase B">
    <location>
        <begin position="19"/>
        <end position="435"/>
    </location>
</feature>
<feature type="active site" description="Nucleophile" evidence="1">
    <location>
        <position position="151"/>
    </location>
</feature>
<feature type="active site" description="Proton donor" evidence="1">
    <location>
        <position position="243"/>
    </location>
</feature>
<feature type="binding site" evidence="1">
    <location>
        <begin position="221"/>
        <end position="225"/>
    </location>
    <ligand>
        <name>substrate</name>
    </ligand>
</feature>
<feature type="glycosylation site" description="N-linked (GlcNAc...) asparagine" evidence="2">
    <location>
        <position position="81"/>
    </location>
</feature>
<feature type="glycosylation site" description="N-linked (GlcNAc...) asparagine" evidence="2">
    <location>
        <position position="158"/>
    </location>
</feature>
<feature type="glycosylation site" description="N-linked (GlcNAc...) asparagine" evidence="2">
    <location>
        <position position="176"/>
    </location>
</feature>
<feature type="glycosylation site" description="N-linked (GlcNAc...) asparagine" evidence="2">
    <location>
        <position position="232"/>
    </location>
</feature>
<feature type="glycosylation site" description="N-linked (GlcNAc...) asparagine" evidence="2">
    <location>
        <position position="378"/>
    </location>
</feature>
<feature type="disulfide bond" evidence="1">
    <location>
        <begin position="41"/>
        <end position="73"/>
    </location>
</feature>
<feature type="disulfide bond" evidence="1">
    <location>
        <begin position="123"/>
        <end position="153"/>
    </location>
</feature>
<proteinExistence type="evidence at transcript level"/>
<name>AGALB_PENSI</name>
<evidence type="ECO:0000250" key="1"/>
<evidence type="ECO:0000255" key="2"/>
<evidence type="ECO:0000305" key="3"/>
<comment type="function">
    <text evidence="1">Hydrolyzes a variety of simple alpha-D-galactoside as well as more complex molecules such as oligosaccharides and polysaccharides.</text>
</comment>
<comment type="catalytic activity">
    <reaction>
        <text>Hydrolysis of terminal, non-reducing alpha-D-galactose residues in alpha-D-galactosides, including galactose oligosaccharides, galactomannans and galactolipids.</text>
        <dbReference type="EC" id="3.2.1.22"/>
    </reaction>
</comment>
<comment type="subcellular location">
    <subcellularLocation>
        <location evidence="3">Secreted</location>
    </subcellularLocation>
</comment>
<comment type="similarity">
    <text evidence="3">Belongs to the glycosyl hydrolase 27 family.</text>
</comment>
<gene>
    <name type="primary">agl1</name>
</gene>
<keyword id="KW-1015">Disulfide bond</keyword>
<keyword id="KW-0325">Glycoprotein</keyword>
<keyword id="KW-0326">Glycosidase</keyword>
<keyword id="KW-0378">Hydrolase</keyword>
<keyword id="KW-0964">Secreted</keyword>
<keyword id="KW-0732">Signal</keyword>
<dbReference type="EC" id="3.2.1.22"/>
<dbReference type="EMBL" id="AJ009956">
    <property type="protein sequence ID" value="CAA08915.1"/>
    <property type="molecule type" value="mRNA"/>
</dbReference>
<dbReference type="SMR" id="O94221"/>
<dbReference type="CAZy" id="GH27">
    <property type="family name" value="Glycoside Hydrolase Family 27"/>
</dbReference>
<dbReference type="GlyCosmos" id="O94221">
    <property type="glycosylation" value="5 sites, No reported glycans"/>
</dbReference>
<dbReference type="GO" id="GO:0005576">
    <property type="term" value="C:extracellular region"/>
    <property type="evidence" value="ECO:0007669"/>
    <property type="project" value="UniProtKB-SubCell"/>
</dbReference>
<dbReference type="GO" id="GO:0004557">
    <property type="term" value="F:alpha-galactosidase activity"/>
    <property type="evidence" value="ECO:0007669"/>
    <property type="project" value="UniProtKB-EC"/>
</dbReference>
<dbReference type="GO" id="GO:0005975">
    <property type="term" value="P:carbohydrate metabolic process"/>
    <property type="evidence" value="ECO:0007669"/>
    <property type="project" value="InterPro"/>
</dbReference>
<dbReference type="CDD" id="cd14792">
    <property type="entry name" value="GH27"/>
    <property type="match status" value="1"/>
</dbReference>
<dbReference type="Gene3D" id="3.20.20.70">
    <property type="entry name" value="Aldolase class I"/>
    <property type="match status" value="1"/>
</dbReference>
<dbReference type="Gene3D" id="2.60.40.1180">
    <property type="entry name" value="Golgi alpha-mannosidase II"/>
    <property type="match status" value="1"/>
</dbReference>
<dbReference type="InterPro" id="IPR013785">
    <property type="entry name" value="Aldolase_TIM"/>
</dbReference>
<dbReference type="InterPro" id="IPR002241">
    <property type="entry name" value="Glyco_hydro_27"/>
</dbReference>
<dbReference type="InterPro" id="IPR000111">
    <property type="entry name" value="Glyco_hydro_27/36_CS"/>
</dbReference>
<dbReference type="InterPro" id="IPR013780">
    <property type="entry name" value="Glyco_hydro_b"/>
</dbReference>
<dbReference type="InterPro" id="IPR017853">
    <property type="entry name" value="Glycoside_hydrolase_SF"/>
</dbReference>
<dbReference type="InterPro" id="IPR041233">
    <property type="entry name" value="Melibiase_C"/>
</dbReference>
<dbReference type="PANTHER" id="PTHR11452:SF61">
    <property type="entry name" value="ALPHA-GALACTOSIDASE B-RELATED"/>
    <property type="match status" value="1"/>
</dbReference>
<dbReference type="PANTHER" id="PTHR11452">
    <property type="entry name" value="ALPHA-GALACTOSIDASE/ALPHA-N-ACETYLGALACTOSAMINIDASE"/>
    <property type="match status" value="1"/>
</dbReference>
<dbReference type="Pfam" id="PF16499">
    <property type="entry name" value="Melibiase_2"/>
    <property type="match status" value="2"/>
</dbReference>
<dbReference type="Pfam" id="PF17801">
    <property type="entry name" value="Melibiase_C"/>
    <property type="match status" value="1"/>
</dbReference>
<dbReference type="PRINTS" id="PR00740">
    <property type="entry name" value="GLHYDRLASE27"/>
</dbReference>
<dbReference type="SUPFAM" id="SSF51445">
    <property type="entry name" value="(Trans)glycosidases"/>
    <property type="match status" value="1"/>
</dbReference>
<dbReference type="SUPFAM" id="SSF51011">
    <property type="entry name" value="Glycosyl hydrolase domain"/>
    <property type="match status" value="1"/>
</dbReference>
<dbReference type="PROSITE" id="PS00512">
    <property type="entry name" value="ALPHA_GALACTOSIDASE"/>
    <property type="match status" value="1"/>
</dbReference>
<protein>
    <recommendedName>
        <fullName>Probable alpha-galactosidase B</fullName>
        <ecNumber>3.2.1.22</ecNumber>
    </recommendedName>
    <alternativeName>
        <fullName>Melibiase B</fullName>
    </alternativeName>
</protein>
<reference key="1">
    <citation type="submission" date="1998-11" db="EMBL/GenBank/DDBJ databases">
        <title>Alpha-galactosidases of Penicillium simplicissimum; production, purification and characterisation of the gene encoding AGLI.</title>
        <authorList>
            <person name="Luonteri E."/>
            <person name="Alatalo E."/>
            <person name="Siika-aho M."/>
            <person name="Tenkanen M."/>
            <person name="Penttilae M."/>
        </authorList>
    </citation>
    <scope>NUCLEOTIDE SEQUENCE [MRNA]</scope>
</reference>
<sequence length="435" mass="47630">MLTSLSLTALALLPSANALVRKDGVGRLPALGWNSWNAFGCDVDSTKIMTAANEMVHLGLKDLGYEYVNIDDCWSVKNTRNSTTQRIIPDTQKFPDGISGVADQVHQLGLKIGIYSSAGETTCAGYPASLGYEKVDAEAFAEWGIDYLKYDNCGVPSNWTDQYSSCVPDGSNEPANGTCPGLSNPAPAGYDWTKSNTFTRYTMMRDALLGQTRTILYSLCDWGQADVNTWGNETGNSWRMSGDISANWARIAQIANENTFRMNYVGFWGHPDPDMLEVGNGDLTAAENRAHFALWAIMKSPLIIGTALDGISDANLAVLKNKYLIEFNQDPIIGRSAHPYKWGYNPDWTFDPAHPAEYWSGPSSTLKGTLVLMLNSENSTSTRTAVWKEIPELKGHNAYRVTDAWSGKDLGCVKKQYSASLASHDVAVLVVKEAC</sequence>
<organism>
    <name type="scientific">Penicillium simplicissimum</name>
    <dbReference type="NCBI Taxonomy" id="69488"/>
    <lineage>
        <taxon>Eukaryota</taxon>
        <taxon>Fungi</taxon>
        <taxon>Dikarya</taxon>
        <taxon>Ascomycota</taxon>
        <taxon>Pezizomycotina</taxon>
        <taxon>Eurotiomycetes</taxon>
        <taxon>Eurotiomycetidae</taxon>
        <taxon>Eurotiales</taxon>
        <taxon>Aspergillaceae</taxon>
        <taxon>Penicillium</taxon>
    </lineage>
</organism>